<sequence length="163" mass="18519">MASIAQAAKSLLLKEFASAFALSMRQFFAPKATLNYPHEKGPVSPRFRGEHALRRYPNGEERCIACKLCEAICPAQAITIEAGPRRNDGTRRTVRYDIDMVKCIYCGFCQEACPVDAIVEGPNFEFATETREELYYDKDKLLANGDRWEREIARNIAMDAPYR</sequence>
<comment type="function">
    <text evidence="1">NDH-1 shuttles electrons from NADH, via FMN and iron-sulfur (Fe-S) centers, to quinones in the respiratory chain. The immediate electron acceptor for the enzyme in this species is believed to be ubiquinone. Couples the redox reaction to proton translocation (for every two electrons transferred, four hydrogen ions are translocated across the cytoplasmic membrane), and thus conserves the redox energy in a proton gradient.</text>
</comment>
<comment type="catalytic activity">
    <reaction evidence="1">
        <text>a quinone + NADH + 5 H(+)(in) = a quinol + NAD(+) + 4 H(+)(out)</text>
        <dbReference type="Rhea" id="RHEA:57888"/>
        <dbReference type="ChEBI" id="CHEBI:15378"/>
        <dbReference type="ChEBI" id="CHEBI:24646"/>
        <dbReference type="ChEBI" id="CHEBI:57540"/>
        <dbReference type="ChEBI" id="CHEBI:57945"/>
        <dbReference type="ChEBI" id="CHEBI:132124"/>
    </reaction>
</comment>
<comment type="cofactor">
    <cofactor evidence="1">
        <name>[4Fe-4S] cluster</name>
        <dbReference type="ChEBI" id="CHEBI:49883"/>
    </cofactor>
    <text evidence="1">Binds 2 [4Fe-4S] clusters per subunit.</text>
</comment>
<comment type="subunit">
    <text evidence="1">NDH-1 is composed of 14 different subunits. Subunits NuoA, H, J, K, L, M, N constitute the membrane sector of the complex.</text>
</comment>
<comment type="subcellular location">
    <subcellularLocation>
        <location evidence="1">Cell inner membrane</location>
        <topology evidence="1">Peripheral membrane protein</topology>
    </subcellularLocation>
</comment>
<comment type="similarity">
    <text evidence="1">Belongs to the complex I 23 kDa subunit family.</text>
</comment>
<organism>
    <name type="scientific">Brucella abortus (strain S19)</name>
    <dbReference type="NCBI Taxonomy" id="430066"/>
    <lineage>
        <taxon>Bacteria</taxon>
        <taxon>Pseudomonadati</taxon>
        <taxon>Pseudomonadota</taxon>
        <taxon>Alphaproteobacteria</taxon>
        <taxon>Hyphomicrobiales</taxon>
        <taxon>Brucellaceae</taxon>
        <taxon>Brucella/Ochrobactrum group</taxon>
        <taxon>Brucella</taxon>
    </lineage>
</organism>
<keyword id="KW-0004">4Fe-4S</keyword>
<keyword id="KW-0997">Cell inner membrane</keyword>
<keyword id="KW-1003">Cell membrane</keyword>
<keyword id="KW-0408">Iron</keyword>
<keyword id="KW-0411">Iron-sulfur</keyword>
<keyword id="KW-0472">Membrane</keyword>
<keyword id="KW-0479">Metal-binding</keyword>
<keyword id="KW-0520">NAD</keyword>
<keyword id="KW-0874">Quinone</keyword>
<keyword id="KW-0677">Repeat</keyword>
<keyword id="KW-1278">Translocase</keyword>
<keyword id="KW-0830">Ubiquinone</keyword>
<evidence type="ECO:0000255" key="1">
    <source>
        <dbReference type="HAMAP-Rule" id="MF_01351"/>
    </source>
</evidence>
<protein>
    <recommendedName>
        <fullName evidence="1">NADH-quinone oxidoreductase subunit I</fullName>
        <ecNumber evidence="1">7.1.1.-</ecNumber>
    </recommendedName>
    <alternativeName>
        <fullName evidence="1">NADH dehydrogenase I subunit I</fullName>
    </alternativeName>
    <alternativeName>
        <fullName evidence="1">NDH-1 subunit I</fullName>
    </alternativeName>
</protein>
<reference key="1">
    <citation type="journal article" date="2008" name="PLoS ONE">
        <title>Genome sequence of Brucella abortus vaccine strain S19 compared to virulent strains yields candidate virulence genes.</title>
        <authorList>
            <person name="Crasta O.R."/>
            <person name="Folkerts O."/>
            <person name="Fei Z."/>
            <person name="Mane S.P."/>
            <person name="Evans C."/>
            <person name="Martino-Catt S."/>
            <person name="Bricker B."/>
            <person name="Yu G."/>
            <person name="Du L."/>
            <person name="Sobral B.W."/>
        </authorList>
    </citation>
    <scope>NUCLEOTIDE SEQUENCE [LARGE SCALE GENOMIC DNA]</scope>
    <source>
        <strain>S19</strain>
    </source>
</reference>
<dbReference type="EC" id="7.1.1.-" evidence="1"/>
<dbReference type="EMBL" id="CP000887">
    <property type="protein sequence ID" value="ACD72298.1"/>
    <property type="molecule type" value="Genomic_DNA"/>
</dbReference>
<dbReference type="RefSeq" id="WP_002963945.1">
    <property type="nucleotide sequence ID" value="NC_010742.1"/>
</dbReference>
<dbReference type="SMR" id="B2S551"/>
<dbReference type="GeneID" id="97533883"/>
<dbReference type="KEGG" id="bmc:BAbS19_I07740"/>
<dbReference type="HOGENOM" id="CLU_067218_5_1_5"/>
<dbReference type="Proteomes" id="UP000002565">
    <property type="component" value="Chromosome 1"/>
</dbReference>
<dbReference type="GO" id="GO:0005886">
    <property type="term" value="C:plasma membrane"/>
    <property type="evidence" value="ECO:0007669"/>
    <property type="project" value="UniProtKB-SubCell"/>
</dbReference>
<dbReference type="GO" id="GO:0051539">
    <property type="term" value="F:4 iron, 4 sulfur cluster binding"/>
    <property type="evidence" value="ECO:0007669"/>
    <property type="project" value="UniProtKB-KW"/>
</dbReference>
<dbReference type="GO" id="GO:0005506">
    <property type="term" value="F:iron ion binding"/>
    <property type="evidence" value="ECO:0007669"/>
    <property type="project" value="UniProtKB-UniRule"/>
</dbReference>
<dbReference type="GO" id="GO:0050136">
    <property type="term" value="F:NADH:ubiquinone reductase (non-electrogenic) activity"/>
    <property type="evidence" value="ECO:0007669"/>
    <property type="project" value="UniProtKB-UniRule"/>
</dbReference>
<dbReference type="GO" id="GO:0048038">
    <property type="term" value="F:quinone binding"/>
    <property type="evidence" value="ECO:0007669"/>
    <property type="project" value="UniProtKB-KW"/>
</dbReference>
<dbReference type="GO" id="GO:0009060">
    <property type="term" value="P:aerobic respiration"/>
    <property type="evidence" value="ECO:0007669"/>
    <property type="project" value="TreeGrafter"/>
</dbReference>
<dbReference type="FunFam" id="3.30.70.3270:FF:000001">
    <property type="entry name" value="NADH-quinone oxidoreductase subunit I 1"/>
    <property type="match status" value="1"/>
</dbReference>
<dbReference type="Gene3D" id="3.30.70.3270">
    <property type="match status" value="1"/>
</dbReference>
<dbReference type="HAMAP" id="MF_01351">
    <property type="entry name" value="NDH1_NuoI"/>
    <property type="match status" value="1"/>
</dbReference>
<dbReference type="InterPro" id="IPR017896">
    <property type="entry name" value="4Fe4S_Fe-S-bd"/>
</dbReference>
<dbReference type="InterPro" id="IPR017900">
    <property type="entry name" value="4Fe4S_Fe_S_CS"/>
</dbReference>
<dbReference type="InterPro" id="IPR010226">
    <property type="entry name" value="NADH_quinone_OxRdtase_chainI"/>
</dbReference>
<dbReference type="NCBIfam" id="TIGR01971">
    <property type="entry name" value="NuoI"/>
    <property type="match status" value="1"/>
</dbReference>
<dbReference type="NCBIfam" id="NF004538">
    <property type="entry name" value="PRK05888.1-4"/>
    <property type="match status" value="1"/>
</dbReference>
<dbReference type="NCBIfam" id="NF004539">
    <property type="entry name" value="PRK05888.1-5"/>
    <property type="match status" value="1"/>
</dbReference>
<dbReference type="PANTHER" id="PTHR10849:SF20">
    <property type="entry name" value="NADH DEHYDROGENASE [UBIQUINONE] IRON-SULFUR PROTEIN 8, MITOCHONDRIAL"/>
    <property type="match status" value="1"/>
</dbReference>
<dbReference type="PANTHER" id="PTHR10849">
    <property type="entry name" value="NADH DEHYDROGENASE UBIQUINONE IRON-SULFUR PROTEIN 8, MITOCHONDRIAL"/>
    <property type="match status" value="1"/>
</dbReference>
<dbReference type="Pfam" id="PF12838">
    <property type="entry name" value="Fer4_7"/>
    <property type="match status" value="1"/>
</dbReference>
<dbReference type="SUPFAM" id="SSF54862">
    <property type="entry name" value="4Fe-4S ferredoxins"/>
    <property type="match status" value="1"/>
</dbReference>
<dbReference type="PROSITE" id="PS00198">
    <property type="entry name" value="4FE4S_FER_1"/>
    <property type="match status" value="2"/>
</dbReference>
<dbReference type="PROSITE" id="PS51379">
    <property type="entry name" value="4FE4S_FER_2"/>
    <property type="match status" value="2"/>
</dbReference>
<name>NUOI_BRUA1</name>
<accession>B2S551</accession>
<proteinExistence type="inferred from homology"/>
<gene>
    <name evidence="1" type="primary">nuoI</name>
    <name type="ordered locus">BAbS19_I07740</name>
</gene>
<feature type="chain" id="PRO_1000143633" description="NADH-quinone oxidoreductase subunit I">
    <location>
        <begin position="1"/>
        <end position="163"/>
    </location>
</feature>
<feature type="domain" description="4Fe-4S ferredoxin-type 1" evidence="1">
    <location>
        <begin position="53"/>
        <end position="83"/>
    </location>
</feature>
<feature type="domain" description="4Fe-4S ferredoxin-type 2" evidence="1">
    <location>
        <begin position="94"/>
        <end position="123"/>
    </location>
</feature>
<feature type="binding site" evidence="1">
    <location>
        <position position="63"/>
    </location>
    <ligand>
        <name>[4Fe-4S] cluster</name>
        <dbReference type="ChEBI" id="CHEBI:49883"/>
        <label>1</label>
    </ligand>
</feature>
<feature type="binding site" evidence="1">
    <location>
        <position position="66"/>
    </location>
    <ligand>
        <name>[4Fe-4S] cluster</name>
        <dbReference type="ChEBI" id="CHEBI:49883"/>
        <label>1</label>
    </ligand>
</feature>
<feature type="binding site" evidence="1">
    <location>
        <position position="69"/>
    </location>
    <ligand>
        <name>[4Fe-4S] cluster</name>
        <dbReference type="ChEBI" id="CHEBI:49883"/>
        <label>1</label>
    </ligand>
</feature>
<feature type="binding site" evidence="1">
    <location>
        <position position="73"/>
    </location>
    <ligand>
        <name>[4Fe-4S] cluster</name>
        <dbReference type="ChEBI" id="CHEBI:49883"/>
        <label>2</label>
    </ligand>
</feature>
<feature type="binding site" evidence="1">
    <location>
        <position position="103"/>
    </location>
    <ligand>
        <name>[4Fe-4S] cluster</name>
        <dbReference type="ChEBI" id="CHEBI:49883"/>
        <label>2</label>
    </ligand>
</feature>
<feature type="binding site" evidence="1">
    <location>
        <position position="106"/>
    </location>
    <ligand>
        <name>[4Fe-4S] cluster</name>
        <dbReference type="ChEBI" id="CHEBI:49883"/>
        <label>2</label>
    </ligand>
</feature>
<feature type="binding site" evidence="1">
    <location>
        <position position="109"/>
    </location>
    <ligand>
        <name>[4Fe-4S] cluster</name>
        <dbReference type="ChEBI" id="CHEBI:49883"/>
        <label>2</label>
    </ligand>
</feature>
<feature type="binding site" evidence="1">
    <location>
        <position position="113"/>
    </location>
    <ligand>
        <name>[4Fe-4S] cluster</name>
        <dbReference type="ChEBI" id="CHEBI:49883"/>
        <label>1</label>
    </ligand>
</feature>